<comment type="catalytic activity">
    <reaction evidence="1">
        <text>D-arabinose 5-phosphate + phosphoenolpyruvate + H2O = 3-deoxy-alpha-D-manno-2-octulosonate-8-phosphate + phosphate</text>
        <dbReference type="Rhea" id="RHEA:14053"/>
        <dbReference type="ChEBI" id="CHEBI:15377"/>
        <dbReference type="ChEBI" id="CHEBI:43474"/>
        <dbReference type="ChEBI" id="CHEBI:57693"/>
        <dbReference type="ChEBI" id="CHEBI:58702"/>
        <dbReference type="ChEBI" id="CHEBI:85985"/>
        <dbReference type="EC" id="2.5.1.55"/>
    </reaction>
</comment>
<comment type="pathway">
    <text evidence="1">Carbohydrate biosynthesis; 3-deoxy-D-manno-octulosonate biosynthesis; 3-deoxy-D-manno-octulosonate from D-ribulose 5-phosphate: step 2/3.</text>
</comment>
<comment type="pathway">
    <text evidence="1">Bacterial outer membrane biogenesis; lipopolysaccharide biosynthesis.</text>
</comment>
<comment type="subcellular location">
    <subcellularLocation>
        <location evidence="1">Cytoplasm</location>
    </subcellularLocation>
</comment>
<comment type="similarity">
    <text evidence="1">Belongs to the KdsA family.</text>
</comment>
<proteinExistence type="inferred from homology"/>
<dbReference type="EC" id="2.5.1.55" evidence="1"/>
<dbReference type="EMBL" id="CP000513">
    <property type="protein sequence ID" value="ABQ14162.1"/>
    <property type="molecule type" value="Genomic_DNA"/>
</dbReference>
<dbReference type="RefSeq" id="WP_012030704.1">
    <property type="nucleotide sequence ID" value="NC_009446.1"/>
</dbReference>
<dbReference type="SMR" id="A5EW23"/>
<dbReference type="STRING" id="246195.DNO_0361"/>
<dbReference type="KEGG" id="dno:DNO_0361"/>
<dbReference type="eggNOG" id="COG2877">
    <property type="taxonomic scope" value="Bacteria"/>
</dbReference>
<dbReference type="HOGENOM" id="CLU_036666_0_0_6"/>
<dbReference type="OrthoDB" id="9776934at2"/>
<dbReference type="UniPathway" id="UPA00030"/>
<dbReference type="UniPathway" id="UPA00357">
    <property type="reaction ID" value="UER00474"/>
</dbReference>
<dbReference type="Proteomes" id="UP000000248">
    <property type="component" value="Chromosome"/>
</dbReference>
<dbReference type="GO" id="GO:0005737">
    <property type="term" value="C:cytoplasm"/>
    <property type="evidence" value="ECO:0007669"/>
    <property type="project" value="UniProtKB-SubCell"/>
</dbReference>
<dbReference type="GO" id="GO:0008676">
    <property type="term" value="F:3-deoxy-8-phosphooctulonate synthase activity"/>
    <property type="evidence" value="ECO:0007669"/>
    <property type="project" value="UniProtKB-UniRule"/>
</dbReference>
<dbReference type="GO" id="GO:0019294">
    <property type="term" value="P:keto-3-deoxy-D-manno-octulosonic acid biosynthetic process"/>
    <property type="evidence" value="ECO:0007669"/>
    <property type="project" value="UniProtKB-UniRule"/>
</dbReference>
<dbReference type="Gene3D" id="3.20.20.70">
    <property type="entry name" value="Aldolase class I"/>
    <property type="match status" value="1"/>
</dbReference>
<dbReference type="HAMAP" id="MF_00056">
    <property type="entry name" value="KDO8P_synth"/>
    <property type="match status" value="1"/>
</dbReference>
<dbReference type="InterPro" id="IPR013785">
    <property type="entry name" value="Aldolase_TIM"/>
</dbReference>
<dbReference type="InterPro" id="IPR006218">
    <property type="entry name" value="DAHP1/KDSA"/>
</dbReference>
<dbReference type="InterPro" id="IPR006269">
    <property type="entry name" value="KDO8P_synthase"/>
</dbReference>
<dbReference type="NCBIfam" id="TIGR01362">
    <property type="entry name" value="KDO8P_synth"/>
    <property type="match status" value="1"/>
</dbReference>
<dbReference type="NCBIfam" id="NF003543">
    <property type="entry name" value="PRK05198.1"/>
    <property type="match status" value="1"/>
</dbReference>
<dbReference type="PANTHER" id="PTHR21057">
    <property type="entry name" value="PHOSPHO-2-DEHYDRO-3-DEOXYHEPTONATE ALDOLASE"/>
    <property type="match status" value="1"/>
</dbReference>
<dbReference type="Pfam" id="PF00793">
    <property type="entry name" value="DAHP_synth_1"/>
    <property type="match status" value="1"/>
</dbReference>
<dbReference type="SUPFAM" id="SSF51569">
    <property type="entry name" value="Aldolase"/>
    <property type="match status" value="1"/>
</dbReference>
<reference key="1">
    <citation type="journal article" date="2007" name="Nat. Biotechnol.">
        <title>Genome sequence and identification of candidate vaccine antigens from the animal pathogen Dichelobacter nodosus.</title>
        <authorList>
            <person name="Myers G.S.A."/>
            <person name="Parker D."/>
            <person name="Al-Hasani K."/>
            <person name="Kennan R.M."/>
            <person name="Seemann T."/>
            <person name="Ren Q."/>
            <person name="Badger J.H."/>
            <person name="Selengut J.D."/>
            <person name="Deboy R.T."/>
            <person name="Tettelin H."/>
            <person name="Boyce J.D."/>
            <person name="McCarl V.P."/>
            <person name="Han X."/>
            <person name="Nelson W.C."/>
            <person name="Madupu R."/>
            <person name="Mohamoud Y."/>
            <person name="Holley T."/>
            <person name="Fedorova N."/>
            <person name="Khouri H."/>
            <person name="Bottomley S.P."/>
            <person name="Whittington R.J."/>
            <person name="Adler B."/>
            <person name="Songer J.G."/>
            <person name="Rood J.I."/>
            <person name="Paulsen I.T."/>
        </authorList>
    </citation>
    <scope>NUCLEOTIDE SEQUENCE [LARGE SCALE GENOMIC DNA]</scope>
    <source>
        <strain>VCS1703A</strain>
    </source>
</reference>
<name>KDSA_DICNV</name>
<evidence type="ECO:0000255" key="1">
    <source>
        <dbReference type="HAMAP-Rule" id="MF_00056"/>
    </source>
</evidence>
<keyword id="KW-0963">Cytoplasm</keyword>
<keyword id="KW-0448">Lipopolysaccharide biosynthesis</keyword>
<keyword id="KW-1185">Reference proteome</keyword>
<keyword id="KW-0808">Transferase</keyword>
<accession>A5EW23</accession>
<gene>
    <name evidence="1" type="primary">kdsA</name>
    <name type="ordered locus">DNO_0361</name>
</gene>
<feature type="chain" id="PRO_1000117775" description="2-dehydro-3-deoxyphosphooctonate aldolase">
    <location>
        <begin position="1"/>
        <end position="277"/>
    </location>
</feature>
<sequence>MKLIDFDVDNDRPFFLIAGPCVIESEYLALHTAEVLKTITDELKIPFIYKSSFDKANRSSGASFRGLGLAEGLRILAKVKETFAVPILTDVHEYTPLDEVASVVDVLQTPAFLCRQTDFITRVCAQGKPVNIKKGQFLAPWDMKHVVAKAKATGNEQIMLCERGASFGYNNLVADMRSLAVMKTFSAPVVFDATHSVQLPGGNGASSGGQREFVPVLARAAIAVGVAGIFMETHPEPEKALSDGANSIPLAQMRHLLQQLRALDTLVKTNELMKELS</sequence>
<protein>
    <recommendedName>
        <fullName evidence="1">2-dehydro-3-deoxyphosphooctonate aldolase</fullName>
        <ecNumber evidence="1">2.5.1.55</ecNumber>
    </recommendedName>
    <alternativeName>
        <fullName evidence="1">3-deoxy-D-manno-octulosonic acid 8-phosphate synthase</fullName>
    </alternativeName>
    <alternativeName>
        <fullName evidence="1">KDO-8-phosphate synthase</fullName>
        <shortName evidence="1">KDO 8-P synthase</shortName>
        <shortName evidence="1">KDOPS</shortName>
    </alternativeName>
    <alternativeName>
        <fullName evidence="1">Phospho-2-dehydro-3-deoxyoctonate aldolase</fullName>
    </alternativeName>
</protein>
<organism>
    <name type="scientific">Dichelobacter nodosus (strain VCS1703A)</name>
    <dbReference type="NCBI Taxonomy" id="246195"/>
    <lineage>
        <taxon>Bacteria</taxon>
        <taxon>Pseudomonadati</taxon>
        <taxon>Pseudomonadota</taxon>
        <taxon>Gammaproteobacteria</taxon>
        <taxon>Cardiobacteriales</taxon>
        <taxon>Cardiobacteriaceae</taxon>
        <taxon>Dichelobacter</taxon>
    </lineage>
</organism>